<organism>
    <name type="scientific">Drosophila virilis</name>
    <name type="common">Fruit fly</name>
    <dbReference type="NCBI Taxonomy" id="7244"/>
    <lineage>
        <taxon>Eukaryota</taxon>
        <taxon>Metazoa</taxon>
        <taxon>Ecdysozoa</taxon>
        <taxon>Arthropoda</taxon>
        <taxon>Hexapoda</taxon>
        <taxon>Insecta</taxon>
        <taxon>Pterygota</taxon>
        <taxon>Neoptera</taxon>
        <taxon>Endopterygota</taxon>
        <taxon>Diptera</taxon>
        <taxon>Brachycera</taxon>
        <taxon>Muscomorpha</taxon>
        <taxon>Ephydroidea</taxon>
        <taxon>Drosophilidae</taxon>
        <taxon>Drosophila</taxon>
    </lineage>
</organism>
<keyword id="KW-0963">Cytoplasm</keyword>
<keyword id="KW-0217">Developmental protein</keyword>
<keyword id="KW-0378">Hydrolase</keyword>
<keyword id="KW-0904">Protein phosphatase</keyword>
<keyword id="KW-0727">SH2 domain</keyword>
<protein>
    <recommendedName>
        <fullName>Tyrosine-protein phosphatase corkscrew</fullName>
        <ecNumber>3.1.3.48</ecNumber>
    </recommendedName>
</protein>
<name>CSW_DROVI</name>
<comment type="function">
    <text evidence="1">Required in all receptor tyrosine kinase signaling pathways. Functions downstream of the receptor tyrosine kinase torso, acting in concert with D-Raf via tailless. Also functions downstream of Egfr (epidermal growth factor receptor) and btl (fibroblast growth factor receptor). The SH2 domain suggests that csw effects its role by mediating heteromeric protein interactions. Maternally required for normal determination of cell fates at the termini of the embryo. Required for cell fate specification of the ventral ectoderm, in the developing embryonic CNS and for embryonic tracheal cell migration. Functions during imaginal development for proper formation of adult structures such as eyes, aristae, L5 wing vein and the tarsal claw (By similarity).</text>
</comment>
<comment type="catalytic activity">
    <reaction evidence="4">
        <text>O-phospho-L-tyrosyl-[protein] + H2O = L-tyrosyl-[protein] + phosphate</text>
        <dbReference type="Rhea" id="RHEA:10684"/>
        <dbReference type="Rhea" id="RHEA-COMP:10136"/>
        <dbReference type="Rhea" id="RHEA-COMP:20101"/>
        <dbReference type="ChEBI" id="CHEBI:15377"/>
        <dbReference type="ChEBI" id="CHEBI:43474"/>
        <dbReference type="ChEBI" id="CHEBI:46858"/>
        <dbReference type="ChEBI" id="CHEBI:61978"/>
        <dbReference type="EC" id="3.1.3.48"/>
    </reaction>
</comment>
<comment type="subcellular location">
    <subcellularLocation>
        <location evidence="1">Cytoplasm</location>
    </subcellularLocation>
</comment>
<comment type="similarity">
    <text evidence="6">Belongs to the protein-tyrosine phosphatase family. Non-receptor class subfamily.</text>
</comment>
<reference key="1">
    <citation type="submission" date="1995-03" db="EMBL/GenBank/DDBJ databases">
        <title>The role of the Drosophila corkscrew protein as a transducer downstream of receptor tyrosine kinases is functionally conserved.</title>
        <authorList>
            <person name="Melnick M.B."/>
            <person name="Melnick C.B."/>
            <person name="Larsen I."/>
            <person name="Perrimon N."/>
            <person name="Perkins L.A."/>
        </authorList>
    </citation>
    <scope>NUCLEOTIDE SEQUENCE [GENOMIC DNA]</scope>
</reference>
<feature type="chain" id="PRO_0000094852" description="Tyrosine-protein phosphatase corkscrew">
    <location>
        <begin position="1" status="less than"/>
        <end position="764"/>
    </location>
</feature>
<feature type="domain" description="SH2" evidence="3">
    <location>
        <begin position="1"/>
        <end position="95"/>
    </location>
</feature>
<feature type="domain" description="Tyrosine-protein phosphatase" evidence="2">
    <location>
        <begin position="117"/>
        <end position="522"/>
    </location>
</feature>
<feature type="region of interest" description="PTPase insert (Cys/Ser-rich)">
    <location>
        <begin position="174"/>
        <end position="325"/>
    </location>
</feature>
<feature type="region of interest" description="Disordered" evidence="5">
    <location>
        <begin position="246"/>
        <end position="273"/>
    </location>
</feature>
<feature type="region of interest" description="Disordered" evidence="5">
    <location>
        <begin position="599"/>
        <end position="666"/>
    </location>
</feature>
<feature type="compositionally biased region" description="Low complexity" evidence="5">
    <location>
        <begin position="255"/>
        <end position="273"/>
    </location>
</feature>
<feature type="compositionally biased region" description="Low complexity" evidence="5">
    <location>
        <begin position="612"/>
        <end position="666"/>
    </location>
</feature>
<feature type="active site" description="Phosphocysteine intermediate" evidence="2 4">
    <location>
        <position position="460"/>
    </location>
</feature>
<feature type="binding site" evidence="1">
    <location>
        <position position="422"/>
    </location>
    <ligand>
        <name>substrate</name>
    </ligand>
</feature>
<feature type="binding site" evidence="1">
    <location>
        <begin position="460"/>
        <end position="466"/>
    </location>
    <ligand>
        <name>substrate</name>
    </ligand>
</feature>
<feature type="binding site" evidence="1">
    <location>
        <position position="507"/>
    </location>
    <ligand>
        <name>substrate</name>
    </ligand>
</feature>
<feature type="non-terminal residue">
    <location>
        <position position="1"/>
    </location>
</feature>
<dbReference type="EC" id="3.1.3.48"/>
<dbReference type="EMBL" id="U22356">
    <property type="protein sequence ID" value="AAB02545.1"/>
    <property type="molecule type" value="Genomic_DNA"/>
</dbReference>
<dbReference type="SMR" id="Q24708"/>
<dbReference type="eggNOG" id="KOG0790">
    <property type="taxonomic scope" value="Eukaryota"/>
</dbReference>
<dbReference type="OrthoDB" id="8815311at2759"/>
<dbReference type="GO" id="GO:0005737">
    <property type="term" value="C:cytoplasm"/>
    <property type="evidence" value="ECO:0000250"/>
    <property type="project" value="UniProtKB"/>
</dbReference>
<dbReference type="GO" id="GO:0004726">
    <property type="term" value="F:non-membrane spanning protein tyrosine phosphatase activity"/>
    <property type="evidence" value="ECO:0007669"/>
    <property type="project" value="TreeGrafter"/>
</dbReference>
<dbReference type="GO" id="GO:0001784">
    <property type="term" value="F:phosphotyrosine residue binding"/>
    <property type="evidence" value="ECO:0007669"/>
    <property type="project" value="TreeGrafter"/>
</dbReference>
<dbReference type="GO" id="GO:0009653">
    <property type="term" value="P:anatomical structure morphogenesis"/>
    <property type="evidence" value="ECO:0007669"/>
    <property type="project" value="UniProtKB-ARBA"/>
</dbReference>
<dbReference type="GO" id="GO:0035556">
    <property type="term" value="P:intracellular signal transduction"/>
    <property type="evidence" value="ECO:0007669"/>
    <property type="project" value="TreeGrafter"/>
</dbReference>
<dbReference type="GO" id="GO:0000278">
    <property type="term" value="P:mitotic cell cycle"/>
    <property type="evidence" value="ECO:0007669"/>
    <property type="project" value="TreeGrafter"/>
</dbReference>
<dbReference type="GO" id="GO:0048666">
    <property type="term" value="P:neuron development"/>
    <property type="evidence" value="ECO:0007669"/>
    <property type="project" value="UniProtKB-ARBA"/>
</dbReference>
<dbReference type="GO" id="GO:0007362">
    <property type="term" value="P:terminal region determination"/>
    <property type="evidence" value="ECO:0000250"/>
    <property type="project" value="UniProtKB"/>
</dbReference>
<dbReference type="GO" id="GO:0008293">
    <property type="term" value="P:torso signaling pathway"/>
    <property type="evidence" value="ECO:0000250"/>
    <property type="project" value="UniProtKB"/>
</dbReference>
<dbReference type="CDD" id="cd09931">
    <property type="entry name" value="SH2_C-SH2_SHP_like"/>
    <property type="match status" value="1"/>
</dbReference>
<dbReference type="FunFam" id="3.90.190.10:FF:000121">
    <property type="entry name" value="Corkscrew, isoform D"/>
    <property type="match status" value="1"/>
</dbReference>
<dbReference type="FunFam" id="3.30.505.10:FF:000012">
    <property type="entry name" value="Tyrosine-protein phosphatase non-receptor type"/>
    <property type="match status" value="1"/>
</dbReference>
<dbReference type="FunFam" id="3.90.190.10:FF:000119">
    <property type="entry name" value="Tyrosine-protein phosphatase non-receptor type"/>
    <property type="match status" value="1"/>
</dbReference>
<dbReference type="Gene3D" id="3.90.190.10">
    <property type="entry name" value="Protein tyrosine phosphatase superfamily"/>
    <property type="match status" value="2"/>
</dbReference>
<dbReference type="Gene3D" id="3.30.505.10">
    <property type="entry name" value="SH2 domain"/>
    <property type="match status" value="1"/>
</dbReference>
<dbReference type="InterPro" id="IPR052123">
    <property type="entry name" value="Non-rcpt_Tyr_Phosphatase"/>
</dbReference>
<dbReference type="InterPro" id="IPR029021">
    <property type="entry name" value="Prot-tyrosine_phosphatase-like"/>
</dbReference>
<dbReference type="InterPro" id="IPR000242">
    <property type="entry name" value="PTP_cat"/>
</dbReference>
<dbReference type="InterPro" id="IPR000980">
    <property type="entry name" value="SH2"/>
</dbReference>
<dbReference type="InterPro" id="IPR036860">
    <property type="entry name" value="SH2_dom_sf"/>
</dbReference>
<dbReference type="InterPro" id="IPR016130">
    <property type="entry name" value="Tyr_Pase_AS"/>
</dbReference>
<dbReference type="InterPro" id="IPR003595">
    <property type="entry name" value="Tyr_Pase_cat"/>
</dbReference>
<dbReference type="InterPro" id="IPR000387">
    <property type="entry name" value="Tyr_Pase_dom"/>
</dbReference>
<dbReference type="PANTHER" id="PTHR46257">
    <property type="entry name" value="TYROSINE-PROTEIN PHOSPHATASE CORKSCREW"/>
    <property type="match status" value="1"/>
</dbReference>
<dbReference type="PANTHER" id="PTHR46257:SF3">
    <property type="entry name" value="TYROSINE-PROTEIN PHOSPHATASE CORKSCREW"/>
    <property type="match status" value="1"/>
</dbReference>
<dbReference type="Pfam" id="PF00017">
    <property type="entry name" value="SH2"/>
    <property type="match status" value="1"/>
</dbReference>
<dbReference type="Pfam" id="PF00102">
    <property type="entry name" value="Y_phosphatase"/>
    <property type="match status" value="1"/>
</dbReference>
<dbReference type="PRINTS" id="PR00700">
    <property type="entry name" value="PRTYPHPHTASE"/>
</dbReference>
<dbReference type="PRINTS" id="PR00401">
    <property type="entry name" value="SH2DOMAIN"/>
</dbReference>
<dbReference type="SMART" id="SM00194">
    <property type="entry name" value="PTPc"/>
    <property type="match status" value="1"/>
</dbReference>
<dbReference type="SMART" id="SM00404">
    <property type="entry name" value="PTPc_motif"/>
    <property type="match status" value="1"/>
</dbReference>
<dbReference type="SMART" id="SM00252">
    <property type="entry name" value="SH2"/>
    <property type="match status" value="1"/>
</dbReference>
<dbReference type="SUPFAM" id="SSF52799">
    <property type="entry name" value="(Phosphotyrosine protein) phosphatases II"/>
    <property type="match status" value="1"/>
</dbReference>
<dbReference type="SUPFAM" id="SSF55550">
    <property type="entry name" value="SH2 domain"/>
    <property type="match status" value="1"/>
</dbReference>
<dbReference type="PROSITE" id="PS50001">
    <property type="entry name" value="SH2"/>
    <property type="match status" value="1"/>
</dbReference>
<dbReference type="PROSITE" id="PS00383">
    <property type="entry name" value="TYR_PHOSPHATASE_1"/>
    <property type="match status" value="1"/>
</dbReference>
<dbReference type="PROSITE" id="PS50056">
    <property type="entry name" value="TYR_PHOSPHATASE_2"/>
    <property type="match status" value="1"/>
</dbReference>
<dbReference type="PROSITE" id="PS50055">
    <property type="entry name" value="TYR_PHOSPHATASE_PTP"/>
    <property type="match status" value="1"/>
</dbReference>
<accession>Q24708</accession>
<proteinExistence type="inferred from homology"/>
<gene>
    <name type="primary">csw</name>
</gene>
<evidence type="ECO:0000250" key="1"/>
<evidence type="ECO:0000255" key="2">
    <source>
        <dbReference type="PROSITE-ProRule" id="PRU00160"/>
    </source>
</evidence>
<evidence type="ECO:0000255" key="3">
    <source>
        <dbReference type="PROSITE-ProRule" id="PRU00191"/>
    </source>
</evidence>
<evidence type="ECO:0000255" key="4">
    <source>
        <dbReference type="PROSITE-ProRule" id="PRU10044"/>
    </source>
</evidence>
<evidence type="ECO:0000256" key="5">
    <source>
        <dbReference type="SAM" id="MobiDB-lite"/>
    </source>
</evidence>
<evidence type="ECO:0000305" key="6"/>
<sequence>WFHGNLSGKEAEKLILERGKNGSFLVRESQSKPGDFVLSVRTDDKVTHVMIRWQDKKYDVGGGESFATLSELIEHYKRHPMVETCGTVVHLRQPFNATRITAAGINARVEQLVKGGFWEEFESLQQDSRDTFSRHEGYKDENRLKNRYHDHTRVKLQDVERSAPGAEYINANYIRLPTDGDLYNMSSSSESLNSTVAACPACTAAQTQRNCPNCHLLNKTCVKCAVKSATLPTNCATCNRKSDSLSKHKRSESMSASANASAAGTGPGTPTAAGNTSAAAALNGCLAVLLKKHCGDASPPPSTTSSCSGPLTGSLLNGEGNQFKTYIATQGCLANTKTDFWNMIWQENTRVIVMTTKEIERGKTKCERYWPDEGQCKQFGHAKVHCIKENSTNDYTLREFLFSWRDKPERRIYHYHFQVWPDHGVPADPGCVLNFLQDVNTKQSSLAQAGEKPGPICVHCSAGIGRTGTFIVIDMILDQIVRNGLDTEIDIQRTIQMVRSQRSGMVQTEAQYKFVYYAVQHYIQTLIARKRAEEQSLQVGREYTNIKYTGEIGNDSQRSPLPPAISNLSLVSCKSAVAEPLTAAAAAAAVAANAGNKHAAKLQPPLPPLGASNNNNSSGNSGSYCNSSSSTSTAQHNGVVSSSNNCSSGSGSANSSNANGNGNILGNGSNMRKSNFYSDSLAALKLQQQQLHDAATAAAAAALASAAAPAATTTAASASAAAAAAAAAKYKNIPKDMNSLRQPHAAYVAAAPALPPPPTPPRKT</sequence>